<gene>
    <name evidence="1" type="primary">ilvD</name>
    <name type="ordered locus">NWMN_1960</name>
</gene>
<protein>
    <recommendedName>
        <fullName evidence="1">Dihydroxy-acid dehydratase</fullName>
        <shortName evidence="1">DAD</shortName>
        <ecNumber evidence="1">4.2.1.9</ecNumber>
    </recommendedName>
</protein>
<dbReference type="EC" id="4.2.1.9" evidence="1"/>
<dbReference type="EMBL" id="AP009351">
    <property type="protein sequence ID" value="BAF68232.1"/>
    <property type="molecule type" value="Genomic_DNA"/>
</dbReference>
<dbReference type="RefSeq" id="WP_001255782.1">
    <property type="nucleotide sequence ID" value="NZ_JBBIAE010000015.1"/>
</dbReference>
<dbReference type="SMR" id="A6QIQ0"/>
<dbReference type="KEGG" id="sae:NWMN_1960"/>
<dbReference type="HOGENOM" id="CLU_014271_4_2_9"/>
<dbReference type="UniPathway" id="UPA00047">
    <property type="reaction ID" value="UER00057"/>
</dbReference>
<dbReference type="UniPathway" id="UPA00049">
    <property type="reaction ID" value="UER00061"/>
</dbReference>
<dbReference type="Proteomes" id="UP000006386">
    <property type="component" value="Chromosome"/>
</dbReference>
<dbReference type="GO" id="GO:0005829">
    <property type="term" value="C:cytosol"/>
    <property type="evidence" value="ECO:0007669"/>
    <property type="project" value="TreeGrafter"/>
</dbReference>
<dbReference type="GO" id="GO:0051537">
    <property type="term" value="F:2 iron, 2 sulfur cluster binding"/>
    <property type="evidence" value="ECO:0007669"/>
    <property type="project" value="UniProtKB-UniRule"/>
</dbReference>
<dbReference type="GO" id="GO:0004160">
    <property type="term" value="F:dihydroxy-acid dehydratase activity"/>
    <property type="evidence" value="ECO:0007669"/>
    <property type="project" value="UniProtKB-UniRule"/>
</dbReference>
<dbReference type="GO" id="GO:0000287">
    <property type="term" value="F:magnesium ion binding"/>
    <property type="evidence" value="ECO:0007669"/>
    <property type="project" value="UniProtKB-UniRule"/>
</dbReference>
<dbReference type="GO" id="GO:0009097">
    <property type="term" value="P:isoleucine biosynthetic process"/>
    <property type="evidence" value="ECO:0007669"/>
    <property type="project" value="UniProtKB-UniRule"/>
</dbReference>
<dbReference type="GO" id="GO:0009099">
    <property type="term" value="P:L-valine biosynthetic process"/>
    <property type="evidence" value="ECO:0007669"/>
    <property type="project" value="UniProtKB-UniRule"/>
</dbReference>
<dbReference type="FunFam" id="3.50.30.80:FF:000001">
    <property type="entry name" value="Dihydroxy-acid dehydratase"/>
    <property type="match status" value="1"/>
</dbReference>
<dbReference type="Gene3D" id="3.50.30.80">
    <property type="entry name" value="IlvD/EDD C-terminal domain-like"/>
    <property type="match status" value="1"/>
</dbReference>
<dbReference type="HAMAP" id="MF_00012">
    <property type="entry name" value="IlvD"/>
    <property type="match status" value="1"/>
</dbReference>
<dbReference type="InterPro" id="IPR042096">
    <property type="entry name" value="Dihydro-acid_dehy_C"/>
</dbReference>
<dbReference type="InterPro" id="IPR004404">
    <property type="entry name" value="DihydroxyA_deHydtase"/>
</dbReference>
<dbReference type="InterPro" id="IPR020558">
    <property type="entry name" value="DiOHA_6PGluconate_deHydtase_CS"/>
</dbReference>
<dbReference type="InterPro" id="IPR056740">
    <property type="entry name" value="ILV_EDD_C"/>
</dbReference>
<dbReference type="InterPro" id="IPR000581">
    <property type="entry name" value="ILV_EDD_N"/>
</dbReference>
<dbReference type="InterPro" id="IPR037237">
    <property type="entry name" value="IlvD/EDD_N"/>
</dbReference>
<dbReference type="NCBIfam" id="TIGR00110">
    <property type="entry name" value="ilvD"/>
    <property type="match status" value="1"/>
</dbReference>
<dbReference type="NCBIfam" id="NF002068">
    <property type="entry name" value="PRK00911.1"/>
    <property type="match status" value="1"/>
</dbReference>
<dbReference type="PANTHER" id="PTHR43661">
    <property type="entry name" value="D-XYLONATE DEHYDRATASE"/>
    <property type="match status" value="1"/>
</dbReference>
<dbReference type="PANTHER" id="PTHR43661:SF3">
    <property type="entry name" value="D-XYLONATE DEHYDRATASE YAGF-RELATED"/>
    <property type="match status" value="1"/>
</dbReference>
<dbReference type="Pfam" id="PF24877">
    <property type="entry name" value="ILV_EDD_C"/>
    <property type="match status" value="1"/>
</dbReference>
<dbReference type="Pfam" id="PF00920">
    <property type="entry name" value="ILVD_EDD_N"/>
    <property type="match status" value="1"/>
</dbReference>
<dbReference type="SUPFAM" id="SSF143975">
    <property type="entry name" value="IlvD/EDD N-terminal domain-like"/>
    <property type="match status" value="1"/>
</dbReference>
<dbReference type="SUPFAM" id="SSF52016">
    <property type="entry name" value="LeuD/IlvD-like"/>
    <property type="match status" value="1"/>
</dbReference>
<dbReference type="PROSITE" id="PS00886">
    <property type="entry name" value="ILVD_EDD_1"/>
    <property type="match status" value="1"/>
</dbReference>
<dbReference type="PROSITE" id="PS00887">
    <property type="entry name" value="ILVD_EDD_2"/>
    <property type="match status" value="1"/>
</dbReference>
<keyword id="KW-0001">2Fe-2S</keyword>
<keyword id="KW-0028">Amino-acid biosynthesis</keyword>
<keyword id="KW-0100">Branched-chain amino acid biosynthesis</keyword>
<keyword id="KW-0408">Iron</keyword>
<keyword id="KW-0411">Iron-sulfur</keyword>
<keyword id="KW-0456">Lyase</keyword>
<keyword id="KW-0460">Magnesium</keyword>
<keyword id="KW-0479">Metal-binding</keyword>
<sequence length="562" mass="60121">MRSDMIKKGDHQAPARSLLHATGALKSPTDMNKPFVAICNSYIDIVPGHVHLRELADIAKEAIREAGAIPFEFNTIGVDDGIAMGHIGMRYSLPSREIIADAAETVINAHWFDGVFYIPNCDKITPGMILAAMRTNVPAIFCSGGPMKAGLSAHGKALTLSSMFEAVGAFKEGSISKEEFLDMEQNACPTCGSCAGMFTANSMNCLMEVLGLALPYNGTALAVSDQRREMIRQAAFKLVENIKNDLKPRDIVTREAIDDAFALDMAMGGSTNTVLHTLAIANEAGIDYDLERINAIAKRTPYLSKIAPSSSYSMHDVHEAGGVPAIINELMKKDGTLHPDRITVTGKTLRENNEGKEIKNFDVIHPLDAPYDAQGGLSILFGNIAPKGAVIKVGGVDPSIKTFTRKAICFNSHDEAVEAIDNRTVRAGHVVVIRYEGPKGGPGMPEMLAPTSSIVGRGLGKDVALITDGRFSGATRGIAVGHISPEAASGGPIALIEDGDEITIDLTNRTLNVNQPEDVLARRRESLTPFKAKVKTGYLARYTALVTSANTGGVMQVPENLI</sequence>
<name>ILVD_STAAE</name>
<evidence type="ECO:0000255" key="1">
    <source>
        <dbReference type="HAMAP-Rule" id="MF_00012"/>
    </source>
</evidence>
<accession>A6QIQ0</accession>
<organism>
    <name type="scientific">Staphylococcus aureus (strain Newman)</name>
    <dbReference type="NCBI Taxonomy" id="426430"/>
    <lineage>
        <taxon>Bacteria</taxon>
        <taxon>Bacillati</taxon>
        <taxon>Bacillota</taxon>
        <taxon>Bacilli</taxon>
        <taxon>Bacillales</taxon>
        <taxon>Staphylococcaceae</taxon>
        <taxon>Staphylococcus</taxon>
    </lineage>
</organism>
<comment type="function">
    <text evidence="1">Functions in the biosynthesis of branched-chain amino acids. Catalyzes the dehydration of (2R,3R)-2,3-dihydroxy-3-methylpentanoate (2,3-dihydroxy-3-methylvalerate) into 2-oxo-3-methylpentanoate (2-oxo-3-methylvalerate) and of (2R)-2,3-dihydroxy-3-methylbutanoate (2,3-dihydroxyisovalerate) into 2-oxo-3-methylbutanoate (2-oxoisovalerate), the penultimate precursor to L-isoleucine and L-valine, respectively.</text>
</comment>
<comment type="catalytic activity">
    <reaction evidence="1">
        <text>(2R)-2,3-dihydroxy-3-methylbutanoate = 3-methyl-2-oxobutanoate + H2O</text>
        <dbReference type="Rhea" id="RHEA:24809"/>
        <dbReference type="ChEBI" id="CHEBI:11851"/>
        <dbReference type="ChEBI" id="CHEBI:15377"/>
        <dbReference type="ChEBI" id="CHEBI:49072"/>
        <dbReference type="EC" id="4.2.1.9"/>
    </reaction>
    <physiologicalReaction direction="left-to-right" evidence="1">
        <dbReference type="Rhea" id="RHEA:24810"/>
    </physiologicalReaction>
</comment>
<comment type="catalytic activity">
    <reaction evidence="1">
        <text>(2R,3R)-2,3-dihydroxy-3-methylpentanoate = (S)-3-methyl-2-oxopentanoate + H2O</text>
        <dbReference type="Rhea" id="RHEA:27694"/>
        <dbReference type="ChEBI" id="CHEBI:15377"/>
        <dbReference type="ChEBI" id="CHEBI:35146"/>
        <dbReference type="ChEBI" id="CHEBI:49258"/>
        <dbReference type="EC" id="4.2.1.9"/>
    </reaction>
    <physiologicalReaction direction="left-to-right" evidence="1">
        <dbReference type="Rhea" id="RHEA:27695"/>
    </physiologicalReaction>
</comment>
<comment type="cofactor">
    <cofactor evidence="1">
        <name>[2Fe-2S] cluster</name>
        <dbReference type="ChEBI" id="CHEBI:190135"/>
    </cofactor>
    <text evidence="1">Binds 1 [2Fe-2S] cluster per subunit. This cluster acts as a Lewis acid cofactor.</text>
</comment>
<comment type="cofactor">
    <cofactor evidence="1">
        <name>Mg(2+)</name>
        <dbReference type="ChEBI" id="CHEBI:18420"/>
    </cofactor>
</comment>
<comment type="pathway">
    <text evidence="1">Amino-acid biosynthesis; L-isoleucine biosynthesis; L-isoleucine from 2-oxobutanoate: step 3/4.</text>
</comment>
<comment type="pathway">
    <text evidence="1">Amino-acid biosynthesis; L-valine biosynthesis; L-valine from pyruvate: step 3/4.</text>
</comment>
<comment type="subunit">
    <text evidence="1">Homodimer.</text>
</comment>
<comment type="similarity">
    <text evidence="1">Belongs to the IlvD/Edd family.</text>
</comment>
<feature type="chain" id="PRO_1000070952" description="Dihydroxy-acid dehydratase">
    <location>
        <begin position="1"/>
        <end position="562"/>
    </location>
</feature>
<feature type="active site" description="Proton acceptor" evidence="1">
    <location>
        <position position="472"/>
    </location>
</feature>
<feature type="binding site" evidence="1">
    <location>
        <position position="80"/>
    </location>
    <ligand>
        <name>Mg(2+)</name>
        <dbReference type="ChEBI" id="CHEBI:18420"/>
    </ligand>
</feature>
<feature type="binding site" evidence="1">
    <location>
        <position position="121"/>
    </location>
    <ligand>
        <name>[2Fe-2S] cluster</name>
        <dbReference type="ChEBI" id="CHEBI:190135"/>
    </ligand>
</feature>
<feature type="binding site" evidence="1">
    <location>
        <position position="122"/>
    </location>
    <ligand>
        <name>Mg(2+)</name>
        <dbReference type="ChEBI" id="CHEBI:18420"/>
    </ligand>
</feature>
<feature type="binding site" description="via carbamate group" evidence="1">
    <location>
        <position position="123"/>
    </location>
    <ligand>
        <name>Mg(2+)</name>
        <dbReference type="ChEBI" id="CHEBI:18420"/>
    </ligand>
</feature>
<feature type="binding site" evidence="1">
    <location>
        <position position="194"/>
    </location>
    <ligand>
        <name>[2Fe-2S] cluster</name>
        <dbReference type="ChEBI" id="CHEBI:190135"/>
    </ligand>
</feature>
<feature type="binding site" evidence="1">
    <location>
        <position position="446"/>
    </location>
    <ligand>
        <name>Mg(2+)</name>
        <dbReference type="ChEBI" id="CHEBI:18420"/>
    </ligand>
</feature>
<feature type="modified residue" description="N6-carboxylysine" evidence="1">
    <location>
        <position position="123"/>
    </location>
</feature>
<reference key="1">
    <citation type="journal article" date="2008" name="J. Bacteriol.">
        <title>Genome sequence of Staphylococcus aureus strain Newman and comparative analysis of staphylococcal genomes: polymorphism and evolution of two major pathogenicity islands.</title>
        <authorList>
            <person name="Baba T."/>
            <person name="Bae T."/>
            <person name="Schneewind O."/>
            <person name="Takeuchi F."/>
            <person name="Hiramatsu K."/>
        </authorList>
    </citation>
    <scope>NUCLEOTIDE SEQUENCE [LARGE SCALE GENOMIC DNA]</scope>
    <source>
        <strain>Newman</strain>
    </source>
</reference>
<proteinExistence type="inferred from homology"/>